<protein>
    <recommendedName>
        <fullName evidence="1">Thiazole synthase</fullName>
        <ecNumber evidence="1">2.8.1.10</ecNumber>
    </recommendedName>
</protein>
<name>THIG_CHLPM</name>
<comment type="function">
    <text evidence="1">Catalyzes the rearrangement of 1-deoxy-D-xylulose 5-phosphate (DXP) to produce the thiazole phosphate moiety of thiamine. Sulfur is provided by the thiocarboxylate moiety of the carrier protein ThiS. In vitro, sulfur can be provided by H(2)S.</text>
</comment>
<comment type="catalytic activity">
    <reaction evidence="1">
        <text>[ThiS sulfur-carrier protein]-C-terminal-Gly-aminoethanethioate + 2-iminoacetate + 1-deoxy-D-xylulose 5-phosphate = [ThiS sulfur-carrier protein]-C-terminal Gly-Gly + 2-[(2R,5Z)-2-carboxy-4-methylthiazol-5(2H)-ylidene]ethyl phosphate + 2 H2O + H(+)</text>
        <dbReference type="Rhea" id="RHEA:26297"/>
        <dbReference type="Rhea" id="RHEA-COMP:12909"/>
        <dbReference type="Rhea" id="RHEA-COMP:19908"/>
        <dbReference type="ChEBI" id="CHEBI:15377"/>
        <dbReference type="ChEBI" id="CHEBI:15378"/>
        <dbReference type="ChEBI" id="CHEBI:57792"/>
        <dbReference type="ChEBI" id="CHEBI:62899"/>
        <dbReference type="ChEBI" id="CHEBI:77846"/>
        <dbReference type="ChEBI" id="CHEBI:90778"/>
        <dbReference type="ChEBI" id="CHEBI:232372"/>
        <dbReference type="EC" id="2.8.1.10"/>
    </reaction>
</comment>
<comment type="pathway">
    <text evidence="1">Cofactor biosynthesis; thiamine diphosphate biosynthesis.</text>
</comment>
<comment type="subunit">
    <text evidence="1">Homotetramer. Forms heterodimers with either ThiH or ThiS.</text>
</comment>
<comment type="subcellular location">
    <subcellularLocation>
        <location evidence="1">Cytoplasm</location>
    </subcellularLocation>
</comment>
<comment type="similarity">
    <text evidence="1">Belongs to the ThiG family.</text>
</comment>
<sequence>MDHLQLAAHTFSSRLILGTGKFSSAAVMLEAVKASGAQLVTVALRRFNREQLEDDLFGPLSELPGITLMPNTSGASTAAEAIKAANISRELSGSPFIKVEIHPNPQHLMPDPIETMEAARVLASEGFLVMPYISPDPVLAKRLEEVGCASVMPLGSAIGSGQGLASAAMLSIIIRESSIPVIVDAGLRAPSEAARAMEMGCSAVLVNSAIAASDNPAEMAAAFRDSTDAGRRAFKAGLMRESREAVATSPLTSFLGEQS</sequence>
<accession>A4SFW2</accession>
<keyword id="KW-0963">Cytoplasm</keyword>
<keyword id="KW-0704">Schiff base</keyword>
<keyword id="KW-0784">Thiamine biosynthesis</keyword>
<keyword id="KW-0808">Transferase</keyword>
<feature type="chain" id="PRO_1000196884" description="Thiazole synthase">
    <location>
        <begin position="1"/>
        <end position="259"/>
    </location>
</feature>
<feature type="active site" description="Schiff-base intermediate with DXP" evidence="1">
    <location>
        <position position="98"/>
    </location>
</feature>
<feature type="binding site" evidence="1">
    <location>
        <position position="159"/>
    </location>
    <ligand>
        <name>1-deoxy-D-xylulose 5-phosphate</name>
        <dbReference type="ChEBI" id="CHEBI:57792"/>
    </ligand>
</feature>
<feature type="binding site" evidence="1">
    <location>
        <begin position="185"/>
        <end position="186"/>
    </location>
    <ligand>
        <name>1-deoxy-D-xylulose 5-phosphate</name>
        <dbReference type="ChEBI" id="CHEBI:57792"/>
    </ligand>
</feature>
<feature type="binding site" evidence="1">
    <location>
        <begin position="207"/>
        <end position="208"/>
    </location>
    <ligand>
        <name>1-deoxy-D-xylulose 5-phosphate</name>
        <dbReference type="ChEBI" id="CHEBI:57792"/>
    </ligand>
</feature>
<reference key="1">
    <citation type="submission" date="2007-03" db="EMBL/GenBank/DDBJ databases">
        <title>Complete sequence of Prosthecochloris vibrioformis DSM 265.</title>
        <authorList>
            <consortium name="US DOE Joint Genome Institute"/>
            <person name="Copeland A."/>
            <person name="Lucas S."/>
            <person name="Lapidus A."/>
            <person name="Barry K."/>
            <person name="Detter J.C."/>
            <person name="Glavina del Rio T."/>
            <person name="Hammon N."/>
            <person name="Israni S."/>
            <person name="Pitluck S."/>
            <person name="Schmutz J."/>
            <person name="Larimer F."/>
            <person name="Land M."/>
            <person name="Hauser L."/>
            <person name="Mikhailova N."/>
            <person name="Li T."/>
            <person name="Overmann J."/>
            <person name="Schuster S.C."/>
            <person name="Bryant D.A."/>
            <person name="Richardson P."/>
        </authorList>
    </citation>
    <scope>NUCLEOTIDE SEQUENCE [LARGE SCALE GENOMIC DNA]</scope>
    <source>
        <strain>DSM 265 / 1930</strain>
    </source>
</reference>
<gene>
    <name evidence="1" type="primary">thiG</name>
    <name type="ordered locus">Cvib_1360</name>
</gene>
<organism>
    <name type="scientific">Chlorobium phaeovibrioides (strain DSM 265 / 1930)</name>
    <name type="common">Prosthecochloris vibrioformis (strain DSM 265)</name>
    <dbReference type="NCBI Taxonomy" id="290318"/>
    <lineage>
        <taxon>Bacteria</taxon>
        <taxon>Pseudomonadati</taxon>
        <taxon>Chlorobiota</taxon>
        <taxon>Chlorobiia</taxon>
        <taxon>Chlorobiales</taxon>
        <taxon>Chlorobiaceae</taxon>
        <taxon>Chlorobium/Pelodictyon group</taxon>
        <taxon>Chlorobium</taxon>
    </lineage>
</organism>
<evidence type="ECO:0000255" key="1">
    <source>
        <dbReference type="HAMAP-Rule" id="MF_00443"/>
    </source>
</evidence>
<proteinExistence type="inferred from homology"/>
<dbReference type="EC" id="2.8.1.10" evidence="1"/>
<dbReference type="EMBL" id="CP000607">
    <property type="protein sequence ID" value="ABP37371.1"/>
    <property type="molecule type" value="Genomic_DNA"/>
</dbReference>
<dbReference type="SMR" id="A4SFW2"/>
<dbReference type="STRING" id="290318.Cvib_1360"/>
<dbReference type="KEGG" id="pvi:Cvib_1360"/>
<dbReference type="eggNOG" id="COG2022">
    <property type="taxonomic scope" value="Bacteria"/>
</dbReference>
<dbReference type="HOGENOM" id="CLU_062233_1_0_10"/>
<dbReference type="OrthoDB" id="9805935at2"/>
<dbReference type="UniPathway" id="UPA00060"/>
<dbReference type="GO" id="GO:0005737">
    <property type="term" value="C:cytoplasm"/>
    <property type="evidence" value="ECO:0007669"/>
    <property type="project" value="UniProtKB-SubCell"/>
</dbReference>
<dbReference type="GO" id="GO:1990107">
    <property type="term" value="F:thiazole synthase activity"/>
    <property type="evidence" value="ECO:0007669"/>
    <property type="project" value="UniProtKB-EC"/>
</dbReference>
<dbReference type="GO" id="GO:0009229">
    <property type="term" value="P:thiamine diphosphate biosynthetic process"/>
    <property type="evidence" value="ECO:0007669"/>
    <property type="project" value="UniProtKB-UniRule"/>
</dbReference>
<dbReference type="CDD" id="cd04728">
    <property type="entry name" value="ThiG"/>
    <property type="match status" value="1"/>
</dbReference>
<dbReference type="Gene3D" id="3.20.20.70">
    <property type="entry name" value="Aldolase class I"/>
    <property type="match status" value="1"/>
</dbReference>
<dbReference type="HAMAP" id="MF_00443">
    <property type="entry name" value="ThiG"/>
    <property type="match status" value="1"/>
</dbReference>
<dbReference type="InterPro" id="IPR013785">
    <property type="entry name" value="Aldolase_TIM"/>
</dbReference>
<dbReference type="InterPro" id="IPR033983">
    <property type="entry name" value="Thiazole_synthase_ThiG"/>
</dbReference>
<dbReference type="InterPro" id="IPR008867">
    <property type="entry name" value="ThiG"/>
</dbReference>
<dbReference type="PANTHER" id="PTHR34266">
    <property type="entry name" value="THIAZOLE SYNTHASE"/>
    <property type="match status" value="1"/>
</dbReference>
<dbReference type="PANTHER" id="PTHR34266:SF2">
    <property type="entry name" value="THIAZOLE SYNTHASE"/>
    <property type="match status" value="1"/>
</dbReference>
<dbReference type="Pfam" id="PF05690">
    <property type="entry name" value="ThiG"/>
    <property type="match status" value="1"/>
</dbReference>
<dbReference type="SUPFAM" id="SSF110399">
    <property type="entry name" value="ThiG-like"/>
    <property type="match status" value="1"/>
</dbReference>